<name>GOGC1_ARATH</name>
<evidence type="ECO:0000255" key="1"/>
<evidence type="ECO:0000256" key="2">
    <source>
        <dbReference type="SAM" id="MobiDB-lite"/>
    </source>
</evidence>
<evidence type="ECO:0000269" key="3">
    <source>
    </source>
</evidence>
<evidence type="ECO:0000303" key="4">
    <source>
    </source>
</evidence>
<evidence type="ECO:0000305" key="5"/>
<gene>
    <name type="primary">GC1</name>
    <name type="ordered locus">At2g19950</name>
    <name type="ORF">F6F22.2</name>
</gene>
<protein>
    <recommendedName>
        <fullName>Golgin candidate 1</fullName>
        <shortName>AtGC1</shortName>
    </recommendedName>
    <alternativeName>
        <fullName>Golgin-84</fullName>
    </alternativeName>
</protein>
<feature type="chain" id="PRO_0000190068" description="Golgin candidate 1">
    <location>
        <begin position="1"/>
        <end position="707"/>
    </location>
</feature>
<feature type="topological domain" description="Cytoplasmic" evidence="1">
    <location>
        <begin position="1"/>
        <end position="664"/>
    </location>
</feature>
<feature type="transmembrane region" description="Helical; Signal-anchor for type II membrane protein" evidence="1">
    <location>
        <begin position="665"/>
        <end position="685"/>
    </location>
</feature>
<feature type="topological domain" description="Lumenal" evidence="1">
    <location>
        <begin position="686"/>
        <end position="707"/>
    </location>
</feature>
<feature type="region of interest" description="Disordered" evidence="2">
    <location>
        <begin position="22"/>
        <end position="106"/>
    </location>
</feature>
<feature type="region of interest" description="Disordered" evidence="2">
    <location>
        <begin position="121"/>
        <end position="196"/>
    </location>
</feature>
<feature type="region of interest" description="Disordered" evidence="2">
    <location>
        <begin position="234"/>
        <end position="256"/>
    </location>
</feature>
<feature type="coiled-coil region" evidence="1">
    <location>
        <begin position="287"/>
        <end position="424"/>
    </location>
</feature>
<feature type="coiled-coil region" evidence="1">
    <location>
        <begin position="452"/>
        <end position="608"/>
    </location>
</feature>
<feature type="compositionally biased region" description="Low complexity" evidence="2">
    <location>
        <begin position="38"/>
        <end position="47"/>
    </location>
</feature>
<feature type="compositionally biased region" description="Basic and acidic residues" evidence="2">
    <location>
        <begin position="56"/>
        <end position="67"/>
    </location>
</feature>
<feature type="compositionally biased region" description="Polar residues" evidence="2">
    <location>
        <begin position="68"/>
        <end position="80"/>
    </location>
</feature>
<feature type="compositionally biased region" description="Low complexity" evidence="2">
    <location>
        <begin position="83"/>
        <end position="95"/>
    </location>
</feature>
<feature type="compositionally biased region" description="Basic and acidic residues" evidence="2">
    <location>
        <begin position="139"/>
        <end position="150"/>
    </location>
</feature>
<feature type="compositionally biased region" description="Basic and acidic residues" evidence="2">
    <location>
        <begin position="185"/>
        <end position="196"/>
    </location>
</feature>
<feature type="compositionally biased region" description="Basic and acidic residues" evidence="2">
    <location>
        <begin position="245"/>
        <end position="254"/>
    </location>
</feature>
<feature type="splice variant" id="VSP_035177" description="In isoform 2." evidence="4">
    <original>K</original>
    <variation>KARQ</variation>
    <location>
        <position position="53"/>
    </location>
</feature>
<feature type="sequence conflict" description="In Ref. 1; ABY67248." evidence="5" ref="1">
    <original>A</original>
    <variation>D</variation>
    <location>
        <position position="636"/>
    </location>
</feature>
<accession>Q8S8N9</accession>
<accession>B0F9L5</accession>
<accession>Q0WNI1</accession>
<accession>Q6NMI2</accession>
<proteinExistence type="evidence at transcript level"/>
<sequence length="707" mass="79180">MASWLKAAEDLFEVVDRRAKSVVEDLSEEQNDLQLPASGRKGSQGKRTSSKKKKLVKEESSNKRDSSGDQSGPGVSQSEVPPSKSSVSTDETSSSGPVLLTREIHPTDADVQSVLSLPLSVADTKSDDAAVVAQESIVDGDRSESKHADGDIPNDSLVQPSPSLPDKEIEVVVSENLMDAPKNGTQRELDDSSKRDVENLDSVVHAPSVNEGNVAQSTGDEVKVGTSINLEKEQEPKVPVTSTNLKREQDRRADTTSMKIQDQLEEAQGLLKATVSTGQSKEARLARVCAGLSSRLQEIKAENAQLEELLTAEQELTKSYEASIRHLQKDLSAAKSEVTKVESSMVEALAAKNSEIETLVSAMDALKNQAALNEGKLSSLQGDMESIMRNRELAETRMMQALREELATTERRAEEERSAHNATKMAAMERERELEHRAVDASTALVRIQRIADERTAKVADFEQKVALLEAECTSLNQELQDMEVRARRGQKKAPDEANQVIQIQAWQDEVDRARQGQRDAEEKLSLMEAEMQKLRVEMAAMKRDAEHYSRQEHTELEKRYRELTDLLYYKQTQLETMASEKAAAEFQLEKEVKRLHEAQVEVEKSRVSRRASATWEEDSEIKTLEPLPLYHRHMATASTQLQNAVKLLDSGAVRATRFLWRYPIARMFLLFYLVFVHLFLMYLIHRLQEQAEAQEVAAMTNNVFRL</sequence>
<dbReference type="EMBL" id="EU249328">
    <property type="protein sequence ID" value="ABY67248.1"/>
    <property type="molecule type" value="mRNA"/>
</dbReference>
<dbReference type="EMBL" id="AC005169">
    <property type="protein sequence ID" value="AAM15012.1"/>
    <property type="status" value="ALT_SEQ"/>
    <property type="molecule type" value="Genomic_DNA"/>
</dbReference>
<dbReference type="EMBL" id="CP002685">
    <property type="protein sequence ID" value="AEC06947.1"/>
    <property type="molecule type" value="Genomic_DNA"/>
</dbReference>
<dbReference type="EMBL" id="CP002685">
    <property type="protein sequence ID" value="AEC06948.1"/>
    <property type="molecule type" value="Genomic_DNA"/>
</dbReference>
<dbReference type="EMBL" id="BT011678">
    <property type="protein sequence ID" value="AAS49041.1"/>
    <property type="molecule type" value="mRNA"/>
</dbReference>
<dbReference type="EMBL" id="AK229460">
    <property type="protein sequence ID" value="BAF01318.1"/>
    <property type="molecule type" value="mRNA"/>
</dbReference>
<dbReference type="PIR" id="B84583">
    <property type="entry name" value="B84583"/>
</dbReference>
<dbReference type="RefSeq" id="NP_001189556.1">
    <molecule id="Q8S8N9-2"/>
    <property type="nucleotide sequence ID" value="NM_001202627.2"/>
</dbReference>
<dbReference type="RefSeq" id="NP_179585.3">
    <molecule id="Q8S8N9-1"/>
    <property type="nucleotide sequence ID" value="NM_127553.3"/>
</dbReference>
<dbReference type="SMR" id="Q8S8N9"/>
<dbReference type="FunCoup" id="Q8S8N9">
    <property type="interactions" value="2155"/>
</dbReference>
<dbReference type="STRING" id="3702.Q8S8N9"/>
<dbReference type="TCDB" id="9.B.392.2.2">
    <property type="family name" value="the golgi apparatus golgin (golgin) family"/>
</dbReference>
<dbReference type="iPTMnet" id="Q8S8N9"/>
<dbReference type="PaxDb" id="3702-AT2G19950.2"/>
<dbReference type="ProteomicsDB" id="247017">
    <molecule id="Q8S8N9-1"/>
</dbReference>
<dbReference type="EnsemblPlants" id="AT2G19950.1">
    <molecule id="Q8S8N9-1"/>
    <property type="protein sequence ID" value="AT2G19950.1"/>
    <property type="gene ID" value="AT2G19950"/>
</dbReference>
<dbReference type="EnsemblPlants" id="AT2G19950.2">
    <molecule id="Q8S8N9-2"/>
    <property type="protein sequence ID" value="AT2G19950.2"/>
    <property type="gene ID" value="AT2G19950"/>
</dbReference>
<dbReference type="GeneID" id="816514"/>
<dbReference type="Gramene" id="AT2G19950.1">
    <molecule id="Q8S8N9-1"/>
    <property type="protein sequence ID" value="AT2G19950.1"/>
    <property type="gene ID" value="AT2G19950"/>
</dbReference>
<dbReference type="Gramene" id="AT2G19950.2">
    <molecule id="Q8S8N9-2"/>
    <property type="protein sequence ID" value="AT2G19950.2"/>
    <property type="gene ID" value="AT2G19950"/>
</dbReference>
<dbReference type="KEGG" id="ath:AT2G19950"/>
<dbReference type="Araport" id="AT2G19950"/>
<dbReference type="TAIR" id="AT2G19950">
    <property type="gene designation" value="GC1"/>
</dbReference>
<dbReference type="eggNOG" id="ENOG502QT7E">
    <property type="taxonomic scope" value="Eukaryota"/>
</dbReference>
<dbReference type="HOGENOM" id="CLU_405131_0_0_1"/>
<dbReference type="InParanoid" id="Q8S8N9"/>
<dbReference type="OMA" id="ANQVHQM"/>
<dbReference type="OrthoDB" id="248903at2759"/>
<dbReference type="PhylomeDB" id="Q8S8N9"/>
<dbReference type="PRO" id="PR:Q8S8N9"/>
<dbReference type="Proteomes" id="UP000006548">
    <property type="component" value="Chromosome 2"/>
</dbReference>
<dbReference type="ExpressionAtlas" id="Q8S8N9">
    <property type="expression patterns" value="baseline and differential"/>
</dbReference>
<dbReference type="GO" id="GO:0005794">
    <property type="term" value="C:Golgi apparatus"/>
    <property type="evidence" value="ECO:0000314"/>
    <property type="project" value="TAIR"/>
</dbReference>
<dbReference type="GO" id="GO:0000139">
    <property type="term" value="C:Golgi membrane"/>
    <property type="evidence" value="ECO:0007669"/>
    <property type="project" value="UniProtKB-SubCell"/>
</dbReference>
<dbReference type="GO" id="GO:0005739">
    <property type="term" value="C:mitochondrion"/>
    <property type="evidence" value="ECO:0007005"/>
    <property type="project" value="TAIR"/>
</dbReference>
<dbReference type="GO" id="GO:0007030">
    <property type="term" value="P:Golgi organization"/>
    <property type="evidence" value="ECO:0007669"/>
    <property type="project" value="InterPro"/>
</dbReference>
<dbReference type="InterPro" id="IPR019177">
    <property type="entry name" value="Golgin_subfamily_A_member_5"/>
</dbReference>
<dbReference type="PANTHER" id="PTHR13815:SF7">
    <property type="entry name" value="GOLGIN SUBFAMILY A MEMBER 5"/>
    <property type="match status" value="1"/>
</dbReference>
<dbReference type="PANTHER" id="PTHR13815">
    <property type="entry name" value="GOLGIN-84"/>
    <property type="match status" value="1"/>
</dbReference>
<dbReference type="Pfam" id="PF09787">
    <property type="entry name" value="Golgin_A5"/>
    <property type="match status" value="1"/>
</dbReference>
<reference key="1">
    <citation type="journal article" date="2007" name="J. Exp. Bot.">
        <title>Localization and domain characterization of Arabidopsis golgin candidates.</title>
        <authorList>
            <person name="Latijnhouwers M."/>
            <person name="Gillespie T."/>
            <person name="Boevink P."/>
            <person name="Kriechbaumer V."/>
            <person name="Hawes C."/>
            <person name="Carvalho C.M."/>
        </authorList>
    </citation>
    <scope>NUCLEOTIDE SEQUENCE [MRNA] (ISOFORM 2)</scope>
    <scope>SUBCELLULAR LOCATION</scope>
    <scope>GENE FAMILY</scope>
    <scope>NOMENCLATURE</scope>
</reference>
<reference key="2">
    <citation type="journal article" date="1999" name="Nature">
        <title>Sequence and analysis of chromosome 2 of the plant Arabidopsis thaliana.</title>
        <authorList>
            <person name="Lin X."/>
            <person name="Kaul S."/>
            <person name="Rounsley S.D."/>
            <person name="Shea T.P."/>
            <person name="Benito M.-I."/>
            <person name="Town C.D."/>
            <person name="Fujii C.Y."/>
            <person name="Mason T.M."/>
            <person name="Bowman C.L."/>
            <person name="Barnstead M.E."/>
            <person name="Feldblyum T.V."/>
            <person name="Buell C.R."/>
            <person name="Ketchum K.A."/>
            <person name="Lee J.J."/>
            <person name="Ronning C.M."/>
            <person name="Koo H.L."/>
            <person name="Moffat K.S."/>
            <person name="Cronin L.A."/>
            <person name="Shen M."/>
            <person name="Pai G."/>
            <person name="Van Aken S."/>
            <person name="Umayam L."/>
            <person name="Tallon L.J."/>
            <person name="Gill J.E."/>
            <person name="Adams M.D."/>
            <person name="Carrera A.J."/>
            <person name="Creasy T.H."/>
            <person name="Goodman H.M."/>
            <person name="Somerville C.R."/>
            <person name="Copenhaver G.P."/>
            <person name="Preuss D."/>
            <person name="Nierman W.C."/>
            <person name="White O."/>
            <person name="Eisen J.A."/>
            <person name="Salzberg S.L."/>
            <person name="Fraser C.M."/>
            <person name="Venter J.C."/>
        </authorList>
    </citation>
    <scope>NUCLEOTIDE SEQUENCE [LARGE SCALE GENOMIC DNA]</scope>
    <source>
        <strain>cv. Columbia</strain>
    </source>
</reference>
<reference key="3">
    <citation type="journal article" date="2017" name="Plant J.">
        <title>Araport11: a complete reannotation of the Arabidopsis thaliana reference genome.</title>
        <authorList>
            <person name="Cheng C.Y."/>
            <person name="Krishnakumar V."/>
            <person name="Chan A.P."/>
            <person name="Thibaud-Nissen F."/>
            <person name="Schobel S."/>
            <person name="Town C.D."/>
        </authorList>
    </citation>
    <scope>GENOME REANNOTATION</scope>
    <source>
        <strain>cv. Columbia</strain>
    </source>
</reference>
<reference key="4">
    <citation type="submission" date="2004-03" db="EMBL/GenBank/DDBJ databases">
        <authorList>
            <person name="Cheuk R.F."/>
            <person name="Chen H."/>
            <person name="Kim C.J."/>
            <person name="Shinn P."/>
            <person name="Carninci P."/>
            <person name="Hayashizaki Y."/>
            <person name="Ishida J."/>
            <person name="Kamiya A."/>
            <person name="Kawai J."/>
            <person name="Narusaka M."/>
            <person name="Sakurai T."/>
            <person name="Satou M."/>
            <person name="Seki M."/>
            <person name="Shinozaki K."/>
            <person name="Ecker J.R."/>
        </authorList>
    </citation>
    <scope>NUCLEOTIDE SEQUENCE [LARGE SCALE MRNA] (ISOFORM 1)</scope>
</reference>
<reference key="5">
    <citation type="submission" date="2006-07" db="EMBL/GenBank/DDBJ databases">
        <title>Large-scale analysis of RIKEN Arabidopsis full-length (RAFL) cDNAs.</title>
        <authorList>
            <person name="Totoki Y."/>
            <person name="Seki M."/>
            <person name="Ishida J."/>
            <person name="Nakajima M."/>
            <person name="Enju A."/>
            <person name="Kamiya A."/>
            <person name="Narusaka M."/>
            <person name="Shin-i T."/>
            <person name="Nakagawa M."/>
            <person name="Sakamoto N."/>
            <person name="Oishi K."/>
            <person name="Kohara Y."/>
            <person name="Kobayashi M."/>
            <person name="Toyoda A."/>
            <person name="Sakaki Y."/>
            <person name="Sakurai T."/>
            <person name="Iida K."/>
            <person name="Akiyama K."/>
            <person name="Satou M."/>
            <person name="Toyoda T."/>
            <person name="Konagaya A."/>
            <person name="Carninci P."/>
            <person name="Kawai J."/>
            <person name="Hayashizaki Y."/>
            <person name="Shinozaki K."/>
        </authorList>
    </citation>
    <scope>NUCLEOTIDE SEQUENCE [LARGE SCALE MRNA] (ISOFORM 1)</scope>
    <source>
        <strain>cv. Columbia</strain>
    </source>
</reference>
<reference key="6">
    <citation type="journal article" date="2002" name="Mol. Biol. Cell">
        <title>CASP, the alternatively spliced product of the gene encoding the CCAAT-displacement protein transcription factor, is a Golgi membrane protein related to giantin.</title>
        <authorList>
            <person name="Gillingham A.K."/>
            <person name="Pfeifer A.C."/>
            <person name="Munro S."/>
        </authorList>
    </citation>
    <scope>IDENTIFICATION</scope>
</reference>
<comment type="function">
    <text>Golgi matrix protein playing a role in tethering of vesicles to Golgi membranes and in maintaining the overall structure of the Golgi apparatus.</text>
</comment>
<comment type="subcellular location">
    <subcellularLocation>
        <location evidence="3">Golgi apparatus membrane</location>
        <topology evidence="3">Single-pass type II membrane protein</topology>
    </subcellularLocation>
    <text>Probably located to cisternal rims of cis or medial Golgi.</text>
</comment>
<comment type="alternative products">
    <event type="alternative splicing"/>
    <isoform>
        <id>Q8S8N9-1</id>
        <name>1</name>
        <sequence type="displayed"/>
    </isoform>
    <isoform>
        <id>Q8S8N9-2</id>
        <name>2</name>
        <sequence type="described" ref="VSP_035177"/>
    </isoform>
</comment>
<comment type="domain">
    <text>The C-terminal domain (558-707) is necessary and sufficient for Golgi targeting.</text>
</comment>
<comment type="sequence caution" evidence="5">
    <conflict type="erroneous gene model prediction">
        <sequence resource="EMBL-CDS" id="AAM15012"/>
    </conflict>
</comment>
<organism>
    <name type="scientific">Arabidopsis thaliana</name>
    <name type="common">Mouse-ear cress</name>
    <dbReference type="NCBI Taxonomy" id="3702"/>
    <lineage>
        <taxon>Eukaryota</taxon>
        <taxon>Viridiplantae</taxon>
        <taxon>Streptophyta</taxon>
        <taxon>Embryophyta</taxon>
        <taxon>Tracheophyta</taxon>
        <taxon>Spermatophyta</taxon>
        <taxon>Magnoliopsida</taxon>
        <taxon>eudicotyledons</taxon>
        <taxon>Gunneridae</taxon>
        <taxon>Pentapetalae</taxon>
        <taxon>rosids</taxon>
        <taxon>malvids</taxon>
        <taxon>Brassicales</taxon>
        <taxon>Brassicaceae</taxon>
        <taxon>Camelineae</taxon>
        <taxon>Arabidopsis</taxon>
    </lineage>
</organism>
<keyword id="KW-0025">Alternative splicing</keyword>
<keyword id="KW-0175">Coiled coil</keyword>
<keyword id="KW-0333">Golgi apparatus</keyword>
<keyword id="KW-0472">Membrane</keyword>
<keyword id="KW-1185">Reference proteome</keyword>
<keyword id="KW-0735">Signal-anchor</keyword>
<keyword id="KW-0812">Transmembrane</keyword>
<keyword id="KW-1133">Transmembrane helix</keyword>